<evidence type="ECO:0000255" key="1">
    <source>
        <dbReference type="HAMAP-Rule" id="MF_00531"/>
    </source>
</evidence>
<evidence type="ECO:0000305" key="2"/>
<organism>
    <name type="scientific">Shewanella baltica (strain OS223)</name>
    <dbReference type="NCBI Taxonomy" id="407976"/>
    <lineage>
        <taxon>Bacteria</taxon>
        <taxon>Pseudomonadati</taxon>
        <taxon>Pseudomonadota</taxon>
        <taxon>Gammaproteobacteria</taxon>
        <taxon>Alteromonadales</taxon>
        <taxon>Shewanellaceae</taxon>
        <taxon>Shewanella</taxon>
    </lineage>
</organism>
<comment type="function">
    <text evidence="1">Protein S19 forms a complex with S13 that binds strongly to the 16S ribosomal RNA.</text>
</comment>
<comment type="similarity">
    <text evidence="1">Belongs to the universal ribosomal protein uS19 family.</text>
</comment>
<keyword id="KW-0687">Ribonucleoprotein</keyword>
<keyword id="KW-0689">Ribosomal protein</keyword>
<keyword id="KW-0694">RNA-binding</keyword>
<keyword id="KW-0699">rRNA-binding</keyword>
<gene>
    <name evidence="1" type="primary">rpsS</name>
    <name type="ordered locus">Sbal223_4052</name>
</gene>
<sequence length="92" mass="10472">MPRSLKKGPFIDLHLLKKVEKAMEAGDKKPIKTWSRRSMIIPNMIGLTIAVHNGRQHVPVFVTDEMIGHKLGEFSPTRTYRGHAADKKAKKR</sequence>
<reference key="1">
    <citation type="submission" date="2008-12" db="EMBL/GenBank/DDBJ databases">
        <title>Complete sequence of chromosome of Shewanella baltica OS223.</title>
        <authorList>
            <consortium name="US DOE Joint Genome Institute"/>
            <person name="Lucas S."/>
            <person name="Copeland A."/>
            <person name="Lapidus A."/>
            <person name="Glavina del Rio T."/>
            <person name="Dalin E."/>
            <person name="Tice H."/>
            <person name="Bruce D."/>
            <person name="Goodwin L."/>
            <person name="Pitluck S."/>
            <person name="Chertkov O."/>
            <person name="Meincke L."/>
            <person name="Brettin T."/>
            <person name="Detter J.C."/>
            <person name="Han C."/>
            <person name="Kuske C.R."/>
            <person name="Larimer F."/>
            <person name="Land M."/>
            <person name="Hauser L."/>
            <person name="Kyrpides N."/>
            <person name="Ovchinnikova G."/>
            <person name="Brettar I."/>
            <person name="Rodrigues J."/>
            <person name="Konstantinidis K."/>
            <person name="Tiedje J."/>
        </authorList>
    </citation>
    <scope>NUCLEOTIDE SEQUENCE [LARGE SCALE GENOMIC DNA]</scope>
    <source>
        <strain>OS223</strain>
    </source>
</reference>
<accession>B8EBK1</accession>
<protein>
    <recommendedName>
        <fullName evidence="1">Small ribosomal subunit protein uS19</fullName>
    </recommendedName>
    <alternativeName>
        <fullName evidence="2">30S ribosomal protein S19</fullName>
    </alternativeName>
</protein>
<name>RS19_SHEB2</name>
<dbReference type="EMBL" id="CP001252">
    <property type="protein sequence ID" value="ACK48525.1"/>
    <property type="molecule type" value="Genomic_DNA"/>
</dbReference>
<dbReference type="RefSeq" id="WP_006083596.1">
    <property type="nucleotide sequence ID" value="NC_011663.1"/>
</dbReference>
<dbReference type="SMR" id="B8EBK1"/>
<dbReference type="GeneID" id="94726190"/>
<dbReference type="KEGG" id="sbp:Sbal223_4052"/>
<dbReference type="HOGENOM" id="CLU_144911_0_1_6"/>
<dbReference type="Proteomes" id="UP000002507">
    <property type="component" value="Chromosome"/>
</dbReference>
<dbReference type="GO" id="GO:0005737">
    <property type="term" value="C:cytoplasm"/>
    <property type="evidence" value="ECO:0007669"/>
    <property type="project" value="UniProtKB-ARBA"/>
</dbReference>
<dbReference type="GO" id="GO:0015935">
    <property type="term" value="C:small ribosomal subunit"/>
    <property type="evidence" value="ECO:0007669"/>
    <property type="project" value="InterPro"/>
</dbReference>
<dbReference type="GO" id="GO:0019843">
    <property type="term" value="F:rRNA binding"/>
    <property type="evidence" value="ECO:0007669"/>
    <property type="project" value="UniProtKB-UniRule"/>
</dbReference>
<dbReference type="GO" id="GO:0003735">
    <property type="term" value="F:structural constituent of ribosome"/>
    <property type="evidence" value="ECO:0007669"/>
    <property type="project" value="InterPro"/>
</dbReference>
<dbReference type="GO" id="GO:0000028">
    <property type="term" value="P:ribosomal small subunit assembly"/>
    <property type="evidence" value="ECO:0007669"/>
    <property type="project" value="TreeGrafter"/>
</dbReference>
<dbReference type="GO" id="GO:0006412">
    <property type="term" value="P:translation"/>
    <property type="evidence" value="ECO:0007669"/>
    <property type="project" value="UniProtKB-UniRule"/>
</dbReference>
<dbReference type="FunFam" id="3.30.860.10:FF:000001">
    <property type="entry name" value="30S ribosomal protein S19"/>
    <property type="match status" value="1"/>
</dbReference>
<dbReference type="Gene3D" id="3.30.860.10">
    <property type="entry name" value="30s Ribosomal Protein S19, Chain A"/>
    <property type="match status" value="1"/>
</dbReference>
<dbReference type="HAMAP" id="MF_00531">
    <property type="entry name" value="Ribosomal_uS19"/>
    <property type="match status" value="1"/>
</dbReference>
<dbReference type="InterPro" id="IPR002222">
    <property type="entry name" value="Ribosomal_uS19"/>
</dbReference>
<dbReference type="InterPro" id="IPR005732">
    <property type="entry name" value="Ribosomal_uS19_bac-type"/>
</dbReference>
<dbReference type="InterPro" id="IPR020934">
    <property type="entry name" value="Ribosomal_uS19_CS"/>
</dbReference>
<dbReference type="InterPro" id="IPR023575">
    <property type="entry name" value="Ribosomal_uS19_SF"/>
</dbReference>
<dbReference type="NCBIfam" id="TIGR01050">
    <property type="entry name" value="rpsS_bact"/>
    <property type="match status" value="1"/>
</dbReference>
<dbReference type="PANTHER" id="PTHR11880">
    <property type="entry name" value="RIBOSOMAL PROTEIN S19P FAMILY MEMBER"/>
    <property type="match status" value="1"/>
</dbReference>
<dbReference type="PANTHER" id="PTHR11880:SF8">
    <property type="entry name" value="SMALL RIBOSOMAL SUBUNIT PROTEIN US19M"/>
    <property type="match status" value="1"/>
</dbReference>
<dbReference type="Pfam" id="PF00203">
    <property type="entry name" value="Ribosomal_S19"/>
    <property type="match status" value="1"/>
</dbReference>
<dbReference type="PIRSF" id="PIRSF002144">
    <property type="entry name" value="Ribosomal_S19"/>
    <property type="match status" value="1"/>
</dbReference>
<dbReference type="PRINTS" id="PR00975">
    <property type="entry name" value="RIBOSOMALS19"/>
</dbReference>
<dbReference type="SUPFAM" id="SSF54570">
    <property type="entry name" value="Ribosomal protein S19"/>
    <property type="match status" value="1"/>
</dbReference>
<dbReference type="PROSITE" id="PS00323">
    <property type="entry name" value="RIBOSOMAL_S19"/>
    <property type="match status" value="1"/>
</dbReference>
<feature type="chain" id="PRO_1000146411" description="Small ribosomal subunit protein uS19">
    <location>
        <begin position="1"/>
        <end position="92"/>
    </location>
</feature>
<proteinExistence type="inferred from homology"/>